<evidence type="ECO:0000255" key="1"/>
<evidence type="ECO:0000255" key="2">
    <source>
        <dbReference type="PROSITE-ProRule" id="PRU00521"/>
    </source>
</evidence>
<evidence type="ECO:0000305" key="3"/>
<evidence type="ECO:0000312" key="4">
    <source>
        <dbReference type="HGNC" id="HGNC:55110"/>
    </source>
</evidence>
<protein>
    <recommendedName>
        <fullName evidence="3">Olfactory receptor 4N4C</fullName>
    </recommendedName>
</protein>
<proteinExistence type="inferred from homology"/>
<dbReference type="EMBL" id="AC135068">
    <property type="status" value="NOT_ANNOTATED_CDS"/>
    <property type="molecule type" value="Genomic_DNA"/>
</dbReference>
<dbReference type="RefSeq" id="NP_001352318.2">
    <property type="nucleotide sequence ID" value="NM_001365389.2"/>
</dbReference>
<dbReference type="SMR" id="A0A096LPK9"/>
<dbReference type="STRING" id="9606.ENSP00000485668"/>
<dbReference type="BioMuta" id="ENSG00000279408"/>
<dbReference type="MassIVE" id="A0A096LPK9"/>
<dbReference type="PaxDb" id="9606-ENSP00000485668"/>
<dbReference type="Ensembl" id="ENST00000623441.1">
    <property type="protein sequence ID" value="ENSP00000485668.1"/>
    <property type="gene ID" value="ENSG00000279408.3"/>
</dbReference>
<dbReference type="GeneID" id="105369274"/>
<dbReference type="MANE-Select" id="ENST00000623441.1">
    <property type="protein sequence ID" value="ENSP00000485668.1"/>
    <property type="RefSeq nucleotide sequence ID" value="NM_001365389.2"/>
    <property type="RefSeq protein sequence ID" value="NP_001352318.2"/>
</dbReference>
<dbReference type="UCSC" id="uc032bup.1">
    <property type="organism name" value="human"/>
</dbReference>
<dbReference type="AGR" id="HGNC:55110"/>
<dbReference type="GeneCards" id="OR4N4C"/>
<dbReference type="HGNC" id="HGNC:55110">
    <property type="gene designation" value="OR4N4C"/>
</dbReference>
<dbReference type="HPA" id="ENSG00000279408">
    <property type="expression patterns" value="Tissue enriched (testis)"/>
</dbReference>
<dbReference type="neXtProt" id="NX_A0A096LPK9"/>
<dbReference type="OpenTargets" id="ENSG00000280709"/>
<dbReference type="VEuPathDB" id="HostDB:ENSG00000279408"/>
<dbReference type="VEuPathDB" id="HostDB:ENSG00000280709"/>
<dbReference type="eggNOG" id="ENOG502SKDS">
    <property type="taxonomic scope" value="Eukaryota"/>
</dbReference>
<dbReference type="GeneTree" id="ENSGT00940000162873"/>
<dbReference type="HOGENOM" id="CLU_012526_8_1_1"/>
<dbReference type="InParanoid" id="A0A096LPK9"/>
<dbReference type="OMA" id="LMSIACC"/>
<dbReference type="OrthoDB" id="6130476at2759"/>
<dbReference type="PRO" id="PR:A0A096LPK9"/>
<dbReference type="Proteomes" id="UP000005640">
    <property type="component" value="Chromosome 15"/>
</dbReference>
<dbReference type="RNAct" id="A0A096LPK9">
    <property type="molecule type" value="protein"/>
</dbReference>
<dbReference type="Bgee" id="ENSG00000279408">
    <property type="expression patterns" value="Expressed in primordial germ cell in gonad and 4 other cell types or tissues"/>
</dbReference>
<dbReference type="GO" id="GO:0005886">
    <property type="term" value="C:plasma membrane"/>
    <property type="evidence" value="ECO:0000318"/>
    <property type="project" value="GO_Central"/>
</dbReference>
<dbReference type="GO" id="GO:0004930">
    <property type="term" value="F:G protein-coupled receptor activity"/>
    <property type="evidence" value="ECO:0007669"/>
    <property type="project" value="UniProtKB-KW"/>
</dbReference>
<dbReference type="GO" id="GO:0004984">
    <property type="term" value="F:olfactory receptor activity"/>
    <property type="evidence" value="ECO:0000318"/>
    <property type="project" value="GO_Central"/>
</dbReference>
<dbReference type="FunFam" id="1.20.1070.10:FF:000007">
    <property type="entry name" value="Olfactory receptor"/>
    <property type="match status" value="1"/>
</dbReference>
<dbReference type="Gene3D" id="1.20.1070.10">
    <property type="entry name" value="Rhodopsin 7-helix transmembrane proteins"/>
    <property type="match status" value="1"/>
</dbReference>
<dbReference type="InterPro" id="IPR000276">
    <property type="entry name" value="GPCR_Rhodpsn"/>
</dbReference>
<dbReference type="InterPro" id="IPR017452">
    <property type="entry name" value="GPCR_Rhodpsn_7TM"/>
</dbReference>
<dbReference type="InterPro" id="IPR000725">
    <property type="entry name" value="Olfact_rcpt"/>
</dbReference>
<dbReference type="InterPro" id="IPR050427">
    <property type="entry name" value="Olfactory_Receptors"/>
</dbReference>
<dbReference type="PANTHER" id="PTHR48002">
    <property type="entry name" value="OLFACTORY RECEPTOR"/>
    <property type="match status" value="1"/>
</dbReference>
<dbReference type="Pfam" id="PF13853">
    <property type="entry name" value="7tm_4"/>
    <property type="match status" value="1"/>
</dbReference>
<dbReference type="PRINTS" id="PR00237">
    <property type="entry name" value="GPCRRHODOPSN"/>
</dbReference>
<dbReference type="PRINTS" id="PR00245">
    <property type="entry name" value="OLFACTORYR"/>
</dbReference>
<dbReference type="SUPFAM" id="SSF81321">
    <property type="entry name" value="Family A G protein-coupled receptor-like"/>
    <property type="match status" value="1"/>
</dbReference>
<dbReference type="PROSITE" id="PS00237">
    <property type="entry name" value="G_PROTEIN_RECEP_F1_1"/>
    <property type="match status" value="1"/>
</dbReference>
<dbReference type="PROSITE" id="PS50262">
    <property type="entry name" value="G_PROTEIN_RECEP_F1_2"/>
    <property type="match status" value="1"/>
</dbReference>
<name>ORN4C_HUMAN</name>
<comment type="function">
    <text evidence="3">Odorant receptor.</text>
</comment>
<comment type="subcellular location">
    <subcellularLocation>
        <location evidence="1">Membrane</location>
        <topology evidence="1">Multi-pass membrane protein</topology>
    </subcellularLocation>
</comment>
<comment type="similarity">
    <text evidence="2">Belongs to the G-protein coupled receptor 1 family.</text>
</comment>
<feature type="chain" id="PRO_0000451614" description="Olfactory receptor 4N4C">
    <location>
        <begin position="1"/>
        <end position="316"/>
    </location>
</feature>
<feature type="topological domain" description="Cytoplasmic" evidence="3">
    <location>
        <begin position="1"/>
        <end position="26"/>
    </location>
</feature>
<feature type="transmembrane region" description="Helical; Name=1" evidence="1">
    <location>
        <begin position="27"/>
        <end position="47"/>
    </location>
</feature>
<feature type="topological domain" description="Extracellular" evidence="3">
    <location>
        <begin position="48"/>
        <end position="56"/>
    </location>
</feature>
<feature type="transmembrane region" description="Helical; Name=2" evidence="1">
    <location>
        <begin position="57"/>
        <end position="77"/>
    </location>
</feature>
<feature type="topological domain" description="Cytoplasmic" evidence="3">
    <location>
        <begin position="78"/>
        <end position="99"/>
    </location>
</feature>
<feature type="transmembrane region" description="Helical; Name=3" evidence="1">
    <location>
        <begin position="100"/>
        <end position="120"/>
    </location>
</feature>
<feature type="topological domain" description="Extracellular" evidence="3">
    <location>
        <begin position="121"/>
        <end position="143"/>
    </location>
</feature>
<feature type="transmembrane region" description="Helical; Name=4" evidence="1">
    <location>
        <begin position="144"/>
        <end position="164"/>
    </location>
</feature>
<feature type="topological domain" description="Cytoplasmic" evidence="3">
    <location>
        <begin position="165"/>
        <end position="204"/>
    </location>
</feature>
<feature type="transmembrane region" description="Helical; Name=5" evidence="1">
    <location>
        <begin position="205"/>
        <end position="225"/>
    </location>
</feature>
<feature type="topological domain" description="Extracellular" evidence="3">
    <location>
        <begin position="226"/>
        <end position="243"/>
    </location>
</feature>
<feature type="transmembrane region" description="Helical; Name=6" evidence="1">
    <location>
        <begin position="244"/>
        <end position="264"/>
    </location>
</feature>
<feature type="topological domain" description="Cytoplasmic" evidence="3">
    <location>
        <begin position="265"/>
        <end position="268"/>
    </location>
</feature>
<feature type="transmembrane region" description="Helical; Name=7" evidence="1">
    <location>
        <begin position="269"/>
        <end position="289"/>
    </location>
</feature>
<feature type="topological domain" description="Extracellular" evidence="3">
    <location>
        <begin position="290"/>
        <end position="316"/>
    </location>
</feature>
<feature type="disulfide bond" evidence="2">
    <location>
        <begin position="97"/>
        <end position="179"/>
    </location>
</feature>
<reference key="1">
    <citation type="journal article" date="2006" name="Nature">
        <title>Analysis of the DNA sequence and duplication history of human chromosome 15.</title>
        <authorList>
            <person name="Zody M.C."/>
            <person name="Garber M."/>
            <person name="Sharpe T."/>
            <person name="Young S.K."/>
            <person name="Rowen L."/>
            <person name="O'Neill K."/>
            <person name="Whittaker C.A."/>
            <person name="Kamal M."/>
            <person name="Chang J.L."/>
            <person name="Cuomo C.A."/>
            <person name="Dewar K."/>
            <person name="FitzGerald M.G."/>
            <person name="Kodira C.D."/>
            <person name="Madan A."/>
            <person name="Qin S."/>
            <person name="Yang X."/>
            <person name="Abbasi N."/>
            <person name="Abouelleil A."/>
            <person name="Arachchi H.M."/>
            <person name="Baradarani L."/>
            <person name="Birditt B."/>
            <person name="Bloom S."/>
            <person name="Bloom T."/>
            <person name="Borowsky M.L."/>
            <person name="Burke J."/>
            <person name="Butler J."/>
            <person name="Cook A."/>
            <person name="DeArellano K."/>
            <person name="DeCaprio D."/>
            <person name="Dorris L. III"/>
            <person name="Dors M."/>
            <person name="Eichler E.E."/>
            <person name="Engels R."/>
            <person name="Fahey J."/>
            <person name="Fleetwood P."/>
            <person name="Friedman C."/>
            <person name="Gearin G."/>
            <person name="Hall J.L."/>
            <person name="Hensley G."/>
            <person name="Johnson E."/>
            <person name="Jones C."/>
            <person name="Kamat A."/>
            <person name="Kaur A."/>
            <person name="Locke D.P."/>
            <person name="Madan A."/>
            <person name="Munson G."/>
            <person name="Jaffe D.B."/>
            <person name="Lui A."/>
            <person name="Macdonald P."/>
            <person name="Mauceli E."/>
            <person name="Naylor J.W."/>
            <person name="Nesbitt R."/>
            <person name="Nicol R."/>
            <person name="O'Leary S.B."/>
            <person name="Ratcliffe A."/>
            <person name="Rounsley S."/>
            <person name="She X."/>
            <person name="Sneddon K.M.B."/>
            <person name="Stewart S."/>
            <person name="Sougnez C."/>
            <person name="Stone S.M."/>
            <person name="Topham K."/>
            <person name="Vincent D."/>
            <person name="Wang S."/>
            <person name="Zimmer A.R."/>
            <person name="Birren B.W."/>
            <person name="Hood L."/>
            <person name="Lander E.S."/>
            <person name="Nusbaum C."/>
        </authorList>
    </citation>
    <scope>NUCLEOTIDE SEQUENCE [LARGE SCALE GENOMIC DNA]</scope>
</reference>
<keyword id="KW-1015">Disulfide bond</keyword>
<keyword id="KW-0297">G-protein coupled receptor</keyword>
<keyword id="KW-0472">Membrane</keyword>
<keyword id="KW-0552">Olfaction</keyword>
<keyword id="KW-0675">Receptor</keyword>
<keyword id="KW-1185">Reference proteome</keyword>
<keyword id="KW-0716">Sensory transduction</keyword>
<keyword id="KW-0807">Transducer</keyword>
<keyword id="KW-0812">Transmembrane</keyword>
<keyword id="KW-1133">Transmembrane helix</keyword>
<organism>
    <name type="scientific">Homo sapiens</name>
    <name type="common">Human</name>
    <dbReference type="NCBI Taxonomy" id="9606"/>
    <lineage>
        <taxon>Eukaryota</taxon>
        <taxon>Metazoa</taxon>
        <taxon>Chordata</taxon>
        <taxon>Craniata</taxon>
        <taxon>Vertebrata</taxon>
        <taxon>Euteleostomi</taxon>
        <taxon>Mammalia</taxon>
        <taxon>Eutheria</taxon>
        <taxon>Euarchontoglires</taxon>
        <taxon>Primates</taxon>
        <taxon>Haplorrhini</taxon>
        <taxon>Catarrhini</taxon>
        <taxon>Hominidae</taxon>
        <taxon>Homo</taxon>
    </lineage>
</organism>
<accession>A0A096LPK9</accession>
<gene>
    <name evidence="4" type="primary">OR4N4C</name>
</gene>
<sequence>MKIANNTVVTEFILLGLTQSQDIQLLVFVLILIFYLIILPGNFLIIFTIRSDPGLTAPLYLFLGNLAFLDASYSFIVAPRMLVDFLSEKKVISYRGCITQLFFLHFLGGGEGLLLVVMAFDRYIAICRPLHCSTVMNPRACYAMMLALWLGGFVHSIIQVVLILRLPFCGPNQLDNFFCDVRQVIKLACTDMFVVELLMVFNSGLMTLLCFLGLLASYAVILCHVRRAASEGKNKAMSTCTTRVIIILLMFGPAIFIYICPFRALPADKMVSLFHTVIFPLMNPMIYTLRNQEVKTSMKRLLSRHVVCQVDFIIRN</sequence>